<gene>
    <name evidence="1" type="primary">rpsE</name>
    <name type="ordered locus">AZOSEA21740</name>
    <name type="ORF">ebA3844</name>
</gene>
<evidence type="ECO:0000255" key="1">
    <source>
        <dbReference type="HAMAP-Rule" id="MF_01307"/>
    </source>
</evidence>
<evidence type="ECO:0000305" key="2"/>
<protein>
    <recommendedName>
        <fullName evidence="1">Small ribosomal subunit protein uS5</fullName>
    </recommendedName>
    <alternativeName>
        <fullName evidence="2">30S ribosomal protein S5</fullName>
    </alternativeName>
</protein>
<keyword id="KW-1185">Reference proteome</keyword>
<keyword id="KW-0687">Ribonucleoprotein</keyword>
<keyword id="KW-0689">Ribosomal protein</keyword>
<keyword id="KW-0694">RNA-binding</keyword>
<keyword id="KW-0699">rRNA-binding</keyword>
<sequence length="174" mass="18098">MAKQQSKRPQAADERDDGLREKMVAINRVTKVVKGGRILGFAALTVVGDGDGGVGMGKGKSREVPVAVQKAMDEARRKLKKISLKNGTLQHAIVGKHGAASVLMQPAPSGTGIIAGGPMRAVFEVMGVTDVTCKCLGSANPYNVVRATLNGLLAINTPAEIAAKRGKSVEEILG</sequence>
<feature type="chain" id="PRO_0000131459" description="Small ribosomal subunit protein uS5">
    <location>
        <begin position="1"/>
        <end position="174"/>
    </location>
</feature>
<feature type="domain" description="S5 DRBM" evidence="1">
    <location>
        <begin position="19"/>
        <end position="82"/>
    </location>
</feature>
<name>RS5_AROAE</name>
<proteinExistence type="inferred from homology"/>
<accession>Q5P315</accession>
<organism>
    <name type="scientific">Aromatoleum aromaticum (strain DSM 19018 / LMG 30748 / EbN1)</name>
    <name type="common">Azoarcus sp. (strain EbN1)</name>
    <dbReference type="NCBI Taxonomy" id="76114"/>
    <lineage>
        <taxon>Bacteria</taxon>
        <taxon>Pseudomonadati</taxon>
        <taxon>Pseudomonadota</taxon>
        <taxon>Betaproteobacteria</taxon>
        <taxon>Rhodocyclales</taxon>
        <taxon>Rhodocyclaceae</taxon>
        <taxon>Aromatoleum</taxon>
    </lineage>
</organism>
<reference key="1">
    <citation type="journal article" date="2005" name="Arch. Microbiol.">
        <title>The genome sequence of an anaerobic aromatic-degrading denitrifying bacterium, strain EbN1.</title>
        <authorList>
            <person name="Rabus R."/>
            <person name="Kube M."/>
            <person name="Heider J."/>
            <person name="Beck A."/>
            <person name="Heitmann K."/>
            <person name="Widdel F."/>
            <person name="Reinhardt R."/>
        </authorList>
    </citation>
    <scope>NUCLEOTIDE SEQUENCE [LARGE SCALE GENOMIC DNA]</scope>
    <source>
        <strain>DSM 19018 / LMG 30748 / EbN1</strain>
    </source>
</reference>
<comment type="function">
    <text evidence="1">With S4 and S12 plays an important role in translational accuracy.</text>
</comment>
<comment type="function">
    <text evidence="1">Located at the back of the 30S subunit body where it stabilizes the conformation of the head with respect to the body.</text>
</comment>
<comment type="subunit">
    <text evidence="1">Part of the 30S ribosomal subunit. Contacts proteins S4 and S8.</text>
</comment>
<comment type="domain">
    <text>The N-terminal domain interacts with the head of the 30S subunit; the C-terminal domain interacts with the body and contacts protein S4. The interaction surface between S4 and S5 is involved in control of translational fidelity.</text>
</comment>
<comment type="similarity">
    <text evidence="1">Belongs to the universal ribosomal protein uS5 family.</text>
</comment>
<dbReference type="EMBL" id="CR555306">
    <property type="protein sequence ID" value="CAI08299.1"/>
    <property type="molecule type" value="Genomic_DNA"/>
</dbReference>
<dbReference type="RefSeq" id="WP_011237989.1">
    <property type="nucleotide sequence ID" value="NC_006513.1"/>
</dbReference>
<dbReference type="SMR" id="Q5P315"/>
<dbReference type="STRING" id="76114.ebA3844"/>
<dbReference type="KEGG" id="eba:ebA3844"/>
<dbReference type="eggNOG" id="COG0098">
    <property type="taxonomic scope" value="Bacteria"/>
</dbReference>
<dbReference type="HOGENOM" id="CLU_065898_2_2_4"/>
<dbReference type="OrthoDB" id="9809045at2"/>
<dbReference type="Proteomes" id="UP000006552">
    <property type="component" value="Chromosome"/>
</dbReference>
<dbReference type="GO" id="GO:0015935">
    <property type="term" value="C:small ribosomal subunit"/>
    <property type="evidence" value="ECO:0007669"/>
    <property type="project" value="InterPro"/>
</dbReference>
<dbReference type="GO" id="GO:0019843">
    <property type="term" value="F:rRNA binding"/>
    <property type="evidence" value="ECO:0007669"/>
    <property type="project" value="UniProtKB-UniRule"/>
</dbReference>
<dbReference type="GO" id="GO:0003735">
    <property type="term" value="F:structural constituent of ribosome"/>
    <property type="evidence" value="ECO:0007669"/>
    <property type="project" value="InterPro"/>
</dbReference>
<dbReference type="GO" id="GO:0006412">
    <property type="term" value="P:translation"/>
    <property type="evidence" value="ECO:0007669"/>
    <property type="project" value="UniProtKB-UniRule"/>
</dbReference>
<dbReference type="FunFam" id="3.30.160.20:FF:000001">
    <property type="entry name" value="30S ribosomal protein S5"/>
    <property type="match status" value="1"/>
</dbReference>
<dbReference type="FunFam" id="3.30.230.10:FF:000002">
    <property type="entry name" value="30S ribosomal protein S5"/>
    <property type="match status" value="1"/>
</dbReference>
<dbReference type="Gene3D" id="3.30.160.20">
    <property type="match status" value="1"/>
</dbReference>
<dbReference type="Gene3D" id="3.30.230.10">
    <property type="match status" value="1"/>
</dbReference>
<dbReference type="HAMAP" id="MF_01307_B">
    <property type="entry name" value="Ribosomal_uS5_B"/>
    <property type="match status" value="1"/>
</dbReference>
<dbReference type="InterPro" id="IPR020568">
    <property type="entry name" value="Ribosomal_Su5_D2-typ_SF"/>
</dbReference>
<dbReference type="InterPro" id="IPR000851">
    <property type="entry name" value="Ribosomal_uS5"/>
</dbReference>
<dbReference type="InterPro" id="IPR005712">
    <property type="entry name" value="Ribosomal_uS5_bac-type"/>
</dbReference>
<dbReference type="InterPro" id="IPR005324">
    <property type="entry name" value="Ribosomal_uS5_C"/>
</dbReference>
<dbReference type="InterPro" id="IPR013810">
    <property type="entry name" value="Ribosomal_uS5_N"/>
</dbReference>
<dbReference type="InterPro" id="IPR018192">
    <property type="entry name" value="Ribosomal_uS5_N_CS"/>
</dbReference>
<dbReference type="InterPro" id="IPR014721">
    <property type="entry name" value="Ribsml_uS5_D2-typ_fold_subgr"/>
</dbReference>
<dbReference type="NCBIfam" id="TIGR01021">
    <property type="entry name" value="rpsE_bact"/>
    <property type="match status" value="1"/>
</dbReference>
<dbReference type="PANTHER" id="PTHR48277">
    <property type="entry name" value="MITOCHONDRIAL RIBOSOMAL PROTEIN S5"/>
    <property type="match status" value="1"/>
</dbReference>
<dbReference type="PANTHER" id="PTHR48277:SF1">
    <property type="entry name" value="MITOCHONDRIAL RIBOSOMAL PROTEIN S5"/>
    <property type="match status" value="1"/>
</dbReference>
<dbReference type="Pfam" id="PF00333">
    <property type="entry name" value="Ribosomal_S5"/>
    <property type="match status" value="1"/>
</dbReference>
<dbReference type="Pfam" id="PF03719">
    <property type="entry name" value="Ribosomal_S5_C"/>
    <property type="match status" value="1"/>
</dbReference>
<dbReference type="SUPFAM" id="SSF54768">
    <property type="entry name" value="dsRNA-binding domain-like"/>
    <property type="match status" value="1"/>
</dbReference>
<dbReference type="SUPFAM" id="SSF54211">
    <property type="entry name" value="Ribosomal protein S5 domain 2-like"/>
    <property type="match status" value="1"/>
</dbReference>
<dbReference type="PROSITE" id="PS00585">
    <property type="entry name" value="RIBOSOMAL_S5"/>
    <property type="match status" value="1"/>
</dbReference>
<dbReference type="PROSITE" id="PS50881">
    <property type="entry name" value="S5_DSRBD"/>
    <property type="match status" value="1"/>
</dbReference>